<feature type="chain" id="PRO_1000091946" description="DNA-directed RNA polymerase subunit alpha">
    <location>
        <begin position="1"/>
        <end position="315"/>
    </location>
</feature>
<feature type="region of interest" description="Alpha N-terminal domain (alpha-NTD)" evidence="1">
    <location>
        <begin position="1"/>
        <end position="228"/>
    </location>
</feature>
<feature type="region of interest" description="Alpha C-terminal domain (alpha-CTD)" evidence="1">
    <location>
        <begin position="245"/>
        <end position="315"/>
    </location>
</feature>
<evidence type="ECO:0000255" key="1">
    <source>
        <dbReference type="HAMAP-Rule" id="MF_00059"/>
    </source>
</evidence>
<name>RPOA_DESAP</name>
<reference key="1">
    <citation type="submission" date="2007-10" db="EMBL/GenBank/DDBJ databases">
        <title>Complete sequence of chromosome of Desulforudis audaxviator MP104C.</title>
        <authorList>
            <person name="Copeland A."/>
            <person name="Lucas S."/>
            <person name="Lapidus A."/>
            <person name="Barry K."/>
            <person name="Glavina del Rio T."/>
            <person name="Dalin E."/>
            <person name="Tice H."/>
            <person name="Bruce D."/>
            <person name="Pitluck S."/>
            <person name="Lowry S.R."/>
            <person name="Larimer F."/>
            <person name="Land M.L."/>
            <person name="Hauser L."/>
            <person name="Kyrpides N."/>
            <person name="Ivanova N.N."/>
            <person name="Richardson P."/>
        </authorList>
    </citation>
    <scope>NUCLEOTIDE SEQUENCE [LARGE SCALE GENOMIC DNA]</scope>
    <source>
        <strain>MP104C</strain>
    </source>
</reference>
<dbReference type="EC" id="2.7.7.6" evidence="1"/>
<dbReference type="EMBL" id="CP000860">
    <property type="protein sequence ID" value="ACA58814.1"/>
    <property type="molecule type" value="Genomic_DNA"/>
</dbReference>
<dbReference type="RefSeq" id="WP_012301406.1">
    <property type="nucleotide sequence ID" value="NC_010424.1"/>
</dbReference>
<dbReference type="SMR" id="B1I1B3"/>
<dbReference type="STRING" id="477974.Daud_0253"/>
<dbReference type="KEGG" id="dau:Daud_0253"/>
<dbReference type="eggNOG" id="COG0202">
    <property type="taxonomic scope" value="Bacteria"/>
</dbReference>
<dbReference type="HOGENOM" id="CLU_053084_0_1_9"/>
<dbReference type="OrthoDB" id="9805706at2"/>
<dbReference type="Proteomes" id="UP000008544">
    <property type="component" value="Chromosome"/>
</dbReference>
<dbReference type="GO" id="GO:0005737">
    <property type="term" value="C:cytoplasm"/>
    <property type="evidence" value="ECO:0007669"/>
    <property type="project" value="UniProtKB-ARBA"/>
</dbReference>
<dbReference type="GO" id="GO:0000428">
    <property type="term" value="C:DNA-directed RNA polymerase complex"/>
    <property type="evidence" value="ECO:0007669"/>
    <property type="project" value="UniProtKB-KW"/>
</dbReference>
<dbReference type="GO" id="GO:0003677">
    <property type="term" value="F:DNA binding"/>
    <property type="evidence" value="ECO:0007669"/>
    <property type="project" value="UniProtKB-UniRule"/>
</dbReference>
<dbReference type="GO" id="GO:0003899">
    <property type="term" value="F:DNA-directed RNA polymerase activity"/>
    <property type="evidence" value="ECO:0007669"/>
    <property type="project" value="UniProtKB-UniRule"/>
</dbReference>
<dbReference type="GO" id="GO:0046983">
    <property type="term" value="F:protein dimerization activity"/>
    <property type="evidence" value="ECO:0007669"/>
    <property type="project" value="InterPro"/>
</dbReference>
<dbReference type="GO" id="GO:0006351">
    <property type="term" value="P:DNA-templated transcription"/>
    <property type="evidence" value="ECO:0007669"/>
    <property type="project" value="UniProtKB-UniRule"/>
</dbReference>
<dbReference type="CDD" id="cd06928">
    <property type="entry name" value="RNAP_alpha_NTD"/>
    <property type="match status" value="1"/>
</dbReference>
<dbReference type="FunFam" id="1.10.150.20:FF:000001">
    <property type="entry name" value="DNA-directed RNA polymerase subunit alpha"/>
    <property type="match status" value="1"/>
</dbReference>
<dbReference type="FunFam" id="2.170.120.12:FF:000001">
    <property type="entry name" value="DNA-directed RNA polymerase subunit alpha"/>
    <property type="match status" value="1"/>
</dbReference>
<dbReference type="Gene3D" id="1.10.150.20">
    <property type="entry name" value="5' to 3' exonuclease, C-terminal subdomain"/>
    <property type="match status" value="1"/>
</dbReference>
<dbReference type="Gene3D" id="2.170.120.12">
    <property type="entry name" value="DNA-directed RNA polymerase, insert domain"/>
    <property type="match status" value="1"/>
</dbReference>
<dbReference type="Gene3D" id="3.30.1360.10">
    <property type="entry name" value="RNA polymerase, RBP11-like subunit"/>
    <property type="match status" value="1"/>
</dbReference>
<dbReference type="HAMAP" id="MF_00059">
    <property type="entry name" value="RNApol_bact_RpoA"/>
    <property type="match status" value="1"/>
</dbReference>
<dbReference type="InterPro" id="IPR011262">
    <property type="entry name" value="DNA-dir_RNA_pol_insert"/>
</dbReference>
<dbReference type="InterPro" id="IPR011263">
    <property type="entry name" value="DNA-dir_RNA_pol_RpoA/D/Rpb3"/>
</dbReference>
<dbReference type="InterPro" id="IPR011773">
    <property type="entry name" value="DNA-dir_RpoA"/>
</dbReference>
<dbReference type="InterPro" id="IPR036603">
    <property type="entry name" value="RBP11-like"/>
</dbReference>
<dbReference type="InterPro" id="IPR011260">
    <property type="entry name" value="RNAP_asu_C"/>
</dbReference>
<dbReference type="InterPro" id="IPR036643">
    <property type="entry name" value="RNApol_insert_sf"/>
</dbReference>
<dbReference type="NCBIfam" id="NF003513">
    <property type="entry name" value="PRK05182.1-2"/>
    <property type="match status" value="1"/>
</dbReference>
<dbReference type="NCBIfam" id="NF003515">
    <property type="entry name" value="PRK05182.2-1"/>
    <property type="match status" value="1"/>
</dbReference>
<dbReference type="NCBIfam" id="NF003516">
    <property type="entry name" value="PRK05182.2-2"/>
    <property type="match status" value="1"/>
</dbReference>
<dbReference type="NCBIfam" id="NF003519">
    <property type="entry name" value="PRK05182.2-5"/>
    <property type="match status" value="1"/>
</dbReference>
<dbReference type="NCBIfam" id="TIGR02027">
    <property type="entry name" value="rpoA"/>
    <property type="match status" value="1"/>
</dbReference>
<dbReference type="Pfam" id="PF01000">
    <property type="entry name" value="RNA_pol_A_bac"/>
    <property type="match status" value="1"/>
</dbReference>
<dbReference type="Pfam" id="PF03118">
    <property type="entry name" value="RNA_pol_A_CTD"/>
    <property type="match status" value="1"/>
</dbReference>
<dbReference type="Pfam" id="PF01193">
    <property type="entry name" value="RNA_pol_L"/>
    <property type="match status" value="1"/>
</dbReference>
<dbReference type="SMART" id="SM00662">
    <property type="entry name" value="RPOLD"/>
    <property type="match status" value="1"/>
</dbReference>
<dbReference type="SUPFAM" id="SSF47789">
    <property type="entry name" value="C-terminal domain of RNA polymerase alpha subunit"/>
    <property type="match status" value="1"/>
</dbReference>
<dbReference type="SUPFAM" id="SSF56553">
    <property type="entry name" value="Insert subdomain of RNA polymerase alpha subunit"/>
    <property type="match status" value="1"/>
</dbReference>
<dbReference type="SUPFAM" id="SSF55257">
    <property type="entry name" value="RBP11-like subunits of RNA polymerase"/>
    <property type="match status" value="1"/>
</dbReference>
<protein>
    <recommendedName>
        <fullName evidence="1">DNA-directed RNA polymerase subunit alpha</fullName>
        <shortName evidence="1">RNAP subunit alpha</shortName>
        <ecNumber evidence="1">2.7.7.6</ecNumber>
    </recommendedName>
    <alternativeName>
        <fullName evidence="1">RNA polymerase subunit alpha</fullName>
    </alternativeName>
    <alternativeName>
        <fullName evidence="1">Transcriptase subunit alpha</fullName>
    </alternativeName>
</protein>
<proteinExistence type="inferred from homology"/>
<accession>B1I1B3</accession>
<keyword id="KW-0240">DNA-directed RNA polymerase</keyword>
<keyword id="KW-0548">Nucleotidyltransferase</keyword>
<keyword id="KW-1185">Reference proteome</keyword>
<keyword id="KW-0804">Transcription</keyword>
<keyword id="KW-0808">Transferase</keyword>
<sequence>MLEIEKPKIECVEMDPEGTYGKFVVDPLERGYGITLGNSLRRVLLASLPGAAVTAVKIDGVLHEFSSIPGVREDVTELILNLKSLRLKLYGEEDRLMRIEAEGEGRITAGDIITSPDVEILNPDLHIATLEPDARLYMELTVGRGRGYVPAEKNKRGNHVIGVIPVDSIFTPVTKVNFTVDKTRVGHDTDFDKLTMEVWTDGSLRPDEALSLAARITTEHLRLFVGLTESVNNVEIMVTKEEEKKNKLLEMPIEELDLSVRSYNCLKRAGINTVEELIQRNEEEMMKVRNLGKKSLEEVVRKLGELGLDLRHDEE</sequence>
<gene>
    <name evidence="1" type="primary">rpoA</name>
    <name type="ordered locus">Daud_0253</name>
</gene>
<organism>
    <name type="scientific">Desulforudis audaxviator (strain MP104C)</name>
    <dbReference type="NCBI Taxonomy" id="477974"/>
    <lineage>
        <taxon>Bacteria</taxon>
        <taxon>Bacillati</taxon>
        <taxon>Bacillota</taxon>
        <taxon>Clostridia</taxon>
        <taxon>Thermoanaerobacterales</taxon>
        <taxon>Candidatus Desulforudaceae</taxon>
        <taxon>Candidatus Desulforudis</taxon>
    </lineage>
</organism>
<comment type="function">
    <text evidence="1">DNA-dependent RNA polymerase catalyzes the transcription of DNA into RNA using the four ribonucleoside triphosphates as substrates.</text>
</comment>
<comment type="catalytic activity">
    <reaction evidence="1">
        <text>RNA(n) + a ribonucleoside 5'-triphosphate = RNA(n+1) + diphosphate</text>
        <dbReference type="Rhea" id="RHEA:21248"/>
        <dbReference type="Rhea" id="RHEA-COMP:14527"/>
        <dbReference type="Rhea" id="RHEA-COMP:17342"/>
        <dbReference type="ChEBI" id="CHEBI:33019"/>
        <dbReference type="ChEBI" id="CHEBI:61557"/>
        <dbReference type="ChEBI" id="CHEBI:140395"/>
        <dbReference type="EC" id="2.7.7.6"/>
    </reaction>
</comment>
<comment type="subunit">
    <text evidence="1">Homodimer. The RNAP catalytic core consists of 2 alpha, 1 beta, 1 beta' and 1 omega subunit. When a sigma factor is associated with the core the holoenzyme is formed, which can initiate transcription.</text>
</comment>
<comment type="domain">
    <text evidence="1">The N-terminal domain is essential for RNAP assembly and basal transcription, whereas the C-terminal domain is involved in interaction with transcriptional regulators and with upstream promoter elements.</text>
</comment>
<comment type="similarity">
    <text evidence="1">Belongs to the RNA polymerase alpha chain family.</text>
</comment>